<proteinExistence type="evidence at protein level"/>
<name>LAMB1_MOUSE</name>
<accession>P02469</accession>
<accession>E9PXZ9</accession>
<dbReference type="EMBL" id="M15525">
    <property type="protein sequence ID" value="AAA39407.1"/>
    <property type="status" value="ALT_INIT"/>
    <property type="molecule type" value="mRNA"/>
</dbReference>
<dbReference type="EMBL" id="CR974423">
    <property type="status" value="NOT_ANNOTATED_CDS"/>
    <property type="molecule type" value="Genomic_DNA"/>
</dbReference>
<dbReference type="EMBL" id="CT571245">
    <property type="status" value="NOT_ANNOTATED_CDS"/>
    <property type="molecule type" value="Genomic_DNA"/>
</dbReference>
<dbReference type="EMBL" id="X05212">
    <property type="protein sequence ID" value="CAA28839.1"/>
    <property type="molecule type" value="mRNA"/>
</dbReference>
<dbReference type="CCDS" id="CCDS25862.2"/>
<dbReference type="PIR" id="A26413">
    <property type="entry name" value="MMMSB1"/>
</dbReference>
<dbReference type="RefSeq" id="NP_032508.3">
    <property type="nucleotide sequence ID" value="NM_008482.3"/>
</dbReference>
<dbReference type="RefSeq" id="XP_006515055.2">
    <property type="nucleotide sequence ID" value="XM_006514992.3"/>
</dbReference>
<dbReference type="RefSeq" id="XP_006515056.1">
    <property type="nucleotide sequence ID" value="XM_006514993.2"/>
</dbReference>
<dbReference type="PDB" id="4AQS">
    <property type="method" value="X-ray"/>
    <property type="resolution" value="3.11 A"/>
    <property type="chains" value="A=22-542"/>
</dbReference>
<dbReference type="PDB" id="5MC9">
    <property type="method" value="X-ray"/>
    <property type="resolution" value="2.13 A"/>
    <property type="chains" value="B=1735-1786"/>
</dbReference>
<dbReference type="PDBsum" id="4AQS"/>
<dbReference type="PDBsum" id="5MC9"/>
<dbReference type="BMRB" id="P02469"/>
<dbReference type="SMR" id="P02469"/>
<dbReference type="BioGRID" id="201101">
    <property type="interactions" value="13"/>
</dbReference>
<dbReference type="ComplexPortal" id="CPX-3008">
    <property type="entry name" value="Laminin-111 complex"/>
</dbReference>
<dbReference type="ComplexPortal" id="CPX-3009">
    <property type="entry name" value="Laminin-211 complex"/>
</dbReference>
<dbReference type="ComplexPortal" id="CPX-3013">
    <property type="entry name" value="Laminin-311 complex variant A"/>
</dbReference>
<dbReference type="ComplexPortal" id="CPX-3015">
    <property type="entry name" value="Laminin-411 complex"/>
</dbReference>
<dbReference type="ComplexPortal" id="CPX-3016">
    <property type="entry name" value="Laminin-511 complex"/>
</dbReference>
<dbReference type="ComplexPortal" id="CPX-3018">
    <property type="entry name" value="Laminin-213 complex"/>
</dbReference>
<dbReference type="ComplexPortal" id="CPX-3167">
    <property type="entry name" value="Laminin-311 complex variant B"/>
</dbReference>
<dbReference type="FunCoup" id="P02469">
    <property type="interactions" value="896"/>
</dbReference>
<dbReference type="IntAct" id="P02469">
    <property type="interactions" value="12"/>
</dbReference>
<dbReference type="MINT" id="P02469"/>
<dbReference type="STRING" id="10090.ENSMUSP00000002979"/>
<dbReference type="GlyConnect" id="2459">
    <property type="glycosylation" value="2 N-Linked glycans (2 sites)"/>
</dbReference>
<dbReference type="GlyCosmos" id="P02469">
    <property type="glycosylation" value="12 sites, 2 glycans"/>
</dbReference>
<dbReference type="GlyGen" id="P02469">
    <property type="glycosylation" value="14 sites, 9 N-linked glycans (7 sites), 1 O-linked glycan (1 site)"/>
</dbReference>
<dbReference type="iPTMnet" id="P02469"/>
<dbReference type="MetOSite" id="P02469"/>
<dbReference type="PhosphoSitePlus" id="P02469"/>
<dbReference type="jPOST" id="P02469"/>
<dbReference type="PaxDb" id="10090-ENSMUSP00000002979"/>
<dbReference type="PeptideAtlas" id="P02469"/>
<dbReference type="ProteomicsDB" id="264911"/>
<dbReference type="Pumba" id="P02469"/>
<dbReference type="Antibodypedia" id="1361">
    <property type="antibodies" value="430 antibodies from 41 providers"/>
</dbReference>
<dbReference type="DNASU" id="16777"/>
<dbReference type="Ensembl" id="ENSMUST00000002979.16">
    <property type="protein sequence ID" value="ENSMUSP00000002979.10"/>
    <property type="gene ID" value="ENSMUSG00000002900.18"/>
</dbReference>
<dbReference type="Ensembl" id="ENSMUST00000169088.8">
    <property type="protein sequence ID" value="ENSMUSP00000132778.2"/>
    <property type="gene ID" value="ENSMUSG00000002900.18"/>
</dbReference>
<dbReference type="GeneID" id="16777"/>
<dbReference type="AGR" id="MGI:96743"/>
<dbReference type="CTD" id="3912"/>
<dbReference type="MGI" id="MGI:96743">
    <property type="gene designation" value="Lamb1"/>
</dbReference>
<dbReference type="VEuPathDB" id="HostDB:ENSMUSG00000002900"/>
<dbReference type="eggNOG" id="KOG0994">
    <property type="taxonomic scope" value="Eukaryota"/>
</dbReference>
<dbReference type="GeneTree" id="ENSGT00940000156003"/>
<dbReference type="HOGENOM" id="CLU_001560_1_0_1"/>
<dbReference type="InParanoid" id="P02469"/>
<dbReference type="OrthoDB" id="5985440at2759"/>
<dbReference type="BioGRID-ORCS" id="16777">
    <property type="hits" value="1 hit in 62 CRISPR screens"/>
</dbReference>
<dbReference type="ChiTaRS" id="Lamb1">
    <property type="organism name" value="mouse"/>
</dbReference>
<dbReference type="EvolutionaryTrace" id="P02469"/>
<dbReference type="PRO" id="PR:P02469"/>
<dbReference type="Proteomes" id="UP000000589">
    <property type="component" value="Chromosome 12"/>
</dbReference>
<dbReference type="RNAct" id="P02469">
    <property type="molecule type" value="protein"/>
</dbReference>
<dbReference type="Bgee" id="ENSMUSG00000002900">
    <property type="expression patterns" value="Expressed in metanephric loop of Henle and 325 other cell types or tissues"/>
</dbReference>
<dbReference type="ExpressionAtlas" id="P02469">
    <property type="expression patterns" value="baseline and differential"/>
</dbReference>
<dbReference type="GO" id="GO:0005604">
    <property type="term" value="C:basement membrane"/>
    <property type="evidence" value="ECO:0000314"/>
    <property type="project" value="UniProtKB"/>
</dbReference>
<dbReference type="GO" id="GO:0062023">
    <property type="term" value="C:collagen-containing extracellular matrix"/>
    <property type="evidence" value="ECO:0007005"/>
    <property type="project" value="BHF-UCL"/>
</dbReference>
<dbReference type="GO" id="GO:0031012">
    <property type="term" value="C:extracellular matrix"/>
    <property type="evidence" value="ECO:0000314"/>
    <property type="project" value="MGI"/>
</dbReference>
<dbReference type="GO" id="GO:0005576">
    <property type="term" value="C:extracellular region"/>
    <property type="evidence" value="ECO:0000304"/>
    <property type="project" value="Reactome"/>
</dbReference>
<dbReference type="GO" id="GO:0005615">
    <property type="term" value="C:extracellular space"/>
    <property type="evidence" value="ECO:0007669"/>
    <property type="project" value="Ensembl"/>
</dbReference>
<dbReference type="GO" id="GO:0043256">
    <property type="term" value="C:laminin complex"/>
    <property type="evidence" value="ECO:0000314"/>
    <property type="project" value="MGI"/>
</dbReference>
<dbReference type="GO" id="GO:0005606">
    <property type="term" value="C:laminin-1 complex"/>
    <property type="evidence" value="ECO:0000314"/>
    <property type="project" value="MGI"/>
</dbReference>
<dbReference type="GO" id="GO:0043259">
    <property type="term" value="C:laminin-10 complex"/>
    <property type="evidence" value="ECO:0000353"/>
    <property type="project" value="MGI"/>
</dbReference>
<dbReference type="GO" id="GO:0005607">
    <property type="term" value="C:laminin-2 complex"/>
    <property type="evidence" value="ECO:0000250"/>
    <property type="project" value="HGNC-UCL"/>
</dbReference>
<dbReference type="GO" id="GO:0043257">
    <property type="term" value="C:laminin-8 complex"/>
    <property type="evidence" value="ECO:0000250"/>
    <property type="project" value="HGNC-UCL"/>
</dbReference>
<dbReference type="GO" id="GO:0005634">
    <property type="term" value="C:nucleus"/>
    <property type="evidence" value="ECO:0000314"/>
    <property type="project" value="MGI"/>
</dbReference>
<dbReference type="GO" id="GO:0048471">
    <property type="term" value="C:perinuclear region of cytoplasm"/>
    <property type="evidence" value="ECO:0000314"/>
    <property type="project" value="UniProtKB"/>
</dbReference>
<dbReference type="GO" id="GO:0098637">
    <property type="term" value="C:protein complex involved in cell-matrix adhesion"/>
    <property type="evidence" value="ECO:0000303"/>
    <property type="project" value="ComplexPortal"/>
</dbReference>
<dbReference type="GO" id="GO:0019899">
    <property type="term" value="F:enzyme binding"/>
    <property type="evidence" value="ECO:0000353"/>
    <property type="project" value="MGI"/>
</dbReference>
<dbReference type="GO" id="GO:0005201">
    <property type="term" value="F:extracellular matrix structural constituent"/>
    <property type="evidence" value="ECO:0000250"/>
    <property type="project" value="HGNC-UCL"/>
</dbReference>
<dbReference type="GO" id="GO:0043208">
    <property type="term" value="F:glycosphingolipid binding"/>
    <property type="evidence" value="ECO:0000314"/>
    <property type="project" value="MGI"/>
</dbReference>
<dbReference type="GO" id="GO:0005178">
    <property type="term" value="F:integrin binding"/>
    <property type="evidence" value="ECO:0000315"/>
    <property type="project" value="MGI"/>
</dbReference>
<dbReference type="GO" id="GO:0016477">
    <property type="term" value="P:cell migration"/>
    <property type="evidence" value="ECO:0000315"/>
    <property type="project" value="MGI"/>
</dbReference>
<dbReference type="GO" id="GO:0007566">
    <property type="term" value="P:embryo implantation"/>
    <property type="evidence" value="ECO:0000315"/>
    <property type="project" value="MGI"/>
</dbReference>
<dbReference type="GO" id="GO:0035987">
    <property type="term" value="P:endodermal cell differentiation"/>
    <property type="evidence" value="ECO:0007669"/>
    <property type="project" value="Ensembl"/>
</dbReference>
<dbReference type="GO" id="GO:0007611">
    <property type="term" value="P:learning or memory"/>
    <property type="evidence" value="ECO:0000303"/>
    <property type="project" value="UniProtKB"/>
</dbReference>
<dbReference type="GO" id="GO:0007162">
    <property type="term" value="P:negative regulation of cell adhesion"/>
    <property type="evidence" value="ECO:0000314"/>
    <property type="project" value="UniProtKB"/>
</dbReference>
<dbReference type="GO" id="GO:0031175">
    <property type="term" value="P:neuron projection development"/>
    <property type="evidence" value="ECO:0000314"/>
    <property type="project" value="MGI"/>
</dbReference>
<dbReference type="GO" id="GO:0021812">
    <property type="term" value="P:neuronal-glial interaction involved in cerebral cortex radial glia guided migration"/>
    <property type="evidence" value="ECO:0007669"/>
    <property type="project" value="Ensembl"/>
</dbReference>
<dbReference type="GO" id="GO:0042476">
    <property type="term" value="P:odontogenesis"/>
    <property type="evidence" value="ECO:0000250"/>
    <property type="project" value="HGNC-UCL"/>
</dbReference>
<dbReference type="GO" id="GO:0045785">
    <property type="term" value="P:positive regulation of cell adhesion"/>
    <property type="evidence" value="ECO:0000303"/>
    <property type="project" value="ComplexPortal"/>
</dbReference>
<dbReference type="GO" id="GO:0030335">
    <property type="term" value="P:positive regulation of cell migration"/>
    <property type="evidence" value="ECO:0000250"/>
    <property type="project" value="HGNC-UCL"/>
</dbReference>
<dbReference type="GO" id="GO:2001046">
    <property type="term" value="P:positive regulation of integrin-mediated signaling pathway"/>
    <property type="evidence" value="ECO:0000303"/>
    <property type="project" value="ComplexPortal"/>
</dbReference>
<dbReference type="GO" id="GO:0051149">
    <property type="term" value="P:positive regulation of muscle cell differentiation"/>
    <property type="evidence" value="ECO:0000303"/>
    <property type="project" value="ComplexPortal"/>
</dbReference>
<dbReference type="GO" id="GO:0110011">
    <property type="term" value="P:regulation of basement membrane organization"/>
    <property type="evidence" value="ECO:0000303"/>
    <property type="project" value="ComplexPortal"/>
</dbReference>
<dbReference type="GO" id="GO:0034446">
    <property type="term" value="P:substrate adhesion-dependent cell spreading"/>
    <property type="evidence" value="ECO:0007669"/>
    <property type="project" value="Ensembl"/>
</dbReference>
<dbReference type="CDD" id="cd22300">
    <property type="entry name" value="cc_LAMB1_C"/>
    <property type="match status" value="1"/>
</dbReference>
<dbReference type="CDD" id="cd00055">
    <property type="entry name" value="EGF_Lam"/>
    <property type="match status" value="13"/>
</dbReference>
<dbReference type="DisProt" id="DP02810"/>
<dbReference type="FunFam" id="2.10.25.10:FF:000011">
    <property type="entry name" value="Cadherin EGF LAG seven-pass G-type receptor"/>
    <property type="match status" value="1"/>
</dbReference>
<dbReference type="FunFam" id="2.10.25.10:FF:000083">
    <property type="entry name" value="Laminin subunit alpha"/>
    <property type="match status" value="1"/>
</dbReference>
<dbReference type="FunFam" id="2.10.25.10:FF:000084">
    <property type="entry name" value="Laminin subunit alpha 3"/>
    <property type="match status" value="1"/>
</dbReference>
<dbReference type="FunFam" id="2.10.25.10:FF:000065">
    <property type="entry name" value="Laminin subunit beta 1"/>
    <property type="match status" value="1"/>
</dbReference>
<dbReference type="FunFam" id="2.10.25.10:FF:000101">
    <property type="entry name" value="Laminin subunit beta 1"/>
    <property type="match status" value="1"/>
</dbReference>
<dbReference type="FunFam" id="2.10.25.10:FF:000130">
    <property type="entry name" value="Laminin subunit beta 1"/>
    <property type="match status" value="1"/>
</dbReference>
<dbReference type="FunFam" id="2.10.25.10:FF:000138">
    <property type="entry name" value="Laminin subunit beta 1"/>
    <property type="match status" value="1"/>
</dbReference>
<dbReference type="FunFam" id="2.10.25.10:FF:000145">
    <property type="entry name" value="Laminin subunit beta 1"/>
    <property type="match status" value="1"/>
</dbReference>
<dbReference type="FunFam" id="2.170.300.10:FF:000004">
    <property type="entry name" value="Laminin subunit beta 1"/>
    <property type="match status" value="1"/>
</dbReference>
<dbReference type="FunFam" id="2.60.120.260:FF:000010">
    <property type="entry name" value="Laminin subunit beta 1"/>
    <property type="match status" value="1"/>
</dbReference>
<dbReference type="FunFam" id="2.10.25.10:FF:000135">
    <property type="entry name" value="Laminin subunit beta 4"/>
    <property type="match status" value="2"/>
</dbReference>
<dbReference type="FunFam" id="2.10.25.10:FF:000280">
    <property type="entry name" value="Laminin subunit beta 4"/>
    <property type="match status" value="1"/>
</dbReference>
<dbReference type="FunFam" id="2.170.300.10:FF:000001">
    <property type="entry name" value="Laminin subunit beta-1"/>
    <property type="match status" value="1"/>
</dbReference>
<dbReference type="Gene3D" id="2.60.120.260">
    <property type="entry name" value="Galactose-binding domain-like"/>
    <property type="match status" value="1"/>
</dbReference>
<dbReference type="Gene3D" id="2.10.25.10">
    <property type="entry name" value="Laminin"/>
    <property type="match status" value="9"/>
</dbReference>
<dbReference type="Gene3D" id="2.170.300.10">
    <property type="entry name" value="Tie2 ligand-binding domain superfamily"/>
    <property type="match status" value="2"/>
</dbReference>
<dbReference type="InterPro" id="IPR000742">
    <property type="entry name" value="EGF-like_dom"/>
</dbReference>
<dbReference type="InterPro" id="IPR056558">
    <property type="entry name" value="LAMB1-4_helical"/>
</dbReference>
<dbReference type="InterPro" id="IPR050440">
    <property type="entry name" value="Laminin/Netrin_ECM"/>
</dbReference>
<dbReference type="InterPro" id="IPR013015">
    <property type="entry name" value="Laminin_IV_B"/>
</dbReference>
<dbReference type="InterPro" id="IPR008211">
    <property type="entry name" value="Laminin_N"/>
</dbReference>
<dbReference type="InterPro" id="IPR002049">
    <property type="entry name" value="LE_dom"/>
</dbReference>
<dbReference type="InterPro" id="IPR056863">
    <property type="entry name" value="LMN_ATRN_NET-like_EGF"/>
</dbReference>
<dbReference type="PANTHER" id="PTHR10574:SF233">
    <property type="entry name" value="LAMININ SUBUNIT BETA-1"/>
    <property type="match status" value="1"/>
</dbReference>
<dbReference type="PANTHER" id="PTHR10574">
    <property type="entry name" value="NETRIN/LAMININ-RELATED"/>
    <property type="match status" value="1"/>
</dbReference>
<dbReference type="Pfam" id="PF00053">
    <property type="entry name" value="EGF_laminin"/>
    <property type="match status" value="11"/>
</dbReference>
<dbReference type="Pfam" id="PF24973">
    <property type="entry name" value="EGF_LMN_ATRN"/>
    <property type="match status" value="2"/>
</dbReference>
<dbReference type="Pfam" id="PF23219">
    <property type="entry name" value="LAMB1"/>
    <property type="match status" value="1"/>
</dbReference>
<dbReference type="Pfam" id="PF21199">
    <property type="entry name" value="LAMININ_IV_B"/>
    <property type="match status" value="1"/>
</dbReference>
<dbReference type="Pfam" id="PF00055">
    <property type="entry name" value="Laminin_N"/>
    <property type="match status" value="1"/>
</dbReference>
<dbReference type="PRINTS" id="PR00011">
    <property type="entry name" value="EGFLAMININ"/>
</dbReference>
<dbReference type="SMART" id="SM00181">
    <property type="entry name" value="EGF"/>
    <property type="match status" value="10"/>
</dbReference>
<dbReference type="SMART" id="SM00180">
    <property type="entry name" value="EGF_Lam"/>
    <property type="match status" value="13"/>
</dbReference>
<dbReference type="SMART" id="SM00136">
    <property type="entry name" value="LamNT"/>
    <property type="match status" value="1"/>
</dbReference>
<dbReference type="SUPFAM" id="SSF57196">
    <property type="entry name" value="EGF/Laminin"/>
    <property type="match status" value="13"/>
</dbReference>
<dbReference type="PROSITE" id="PS00022">
    <property type="entry name" value="EGF_1"/>
    <property type="match status" value="9"/>
</dbReference>
<dbReference type="PROSITE" id="PS01186">
    <property type="entry name" value="EGF_2"/>
    <property type="match status" value="2"/>
</dbReference>
<dbReference type="PROSITE" id="PS01248">
    <property type="entry name" value="EGF_LAM_1"/>
    <property type="match status" value="11"/>
</dbReference>
<dbReference type="PROSITE" id="PS50027">
    <property type="entry name" value="EGF_LAM_2"/>
    <property type="match status" value="13"/>
</dbReference>
<dbReference type="PROSITE" id="PS51116">
    <property type="entry name" value="LAMININ_IVB"/>
    <property type="match status" value="1"/>
</dbReference>
<dbReference type="PROSITE" id="PS51117">
    <property type="entry name" value="LAMININ_NTER"/>
    <property type="match status" value="1"/>
</dbReference>
<gene>
    <name type="primary">Lamb1</name>
    <name type="synonym">Lamb-1</name>
    <name type="synonym">Lamb1-1</name>
</gene>
<reference key="1">
    <citation type="journal article" date="1987" name="Proc. Natl. Acad. Sci. U.S.A.">
        <title>Sequence of the cDNA encoding the laminin B1 chain reveals a multidomain protein containing cysteine-rich repeats.</title>
        <authorList>
            <person name="Sasaki M."/>
            <person name="Kato S."/>
            <person name="Kohno K."/>
            <person name="Martin G.R."/>
            <person name="Yamada Y."/>
        </authorList>
    </citation>
    <scope>NUCLEOTIDE SEQUENCE [MRNA]</scope>
</reference>
<reference key="2">
    <citation type="journal article" date="2009" name="PLoS Biol.">
        <title>Lineage-specific biology revealed by a finished genome assembly of the mouse.</title>
        <authorList>
            <person name="Church D.M."/>
            <person name="Goodstadt L."/>
            <person name="Hillier L.W."/>
            <person name="Zody M.C."/>
            <person name="Goldstein S."/>
            <person name="She X."/>
            <person name="Bult C.J."/>
            <person name="Agarwala R."/>
            <person name="Cherry J.L."/>
            <person name="DiCuccio M."/>
            <person name="Hlavina W."/>
            <person name="Kapustin Y."/>
            <person name="Meric P."/>
            <person name="Maglott D."/>
            <person name="Birtle Z."/>
            <person name="Marques A.C."/>
            <person name="Graves T."/>
            <person name="Zhou S."/>
            <person name="Teague B."/>
            <person name="Potamousis K."/>
            <person name="Churas C."/>
            <person name="Place M."/>
            <person name="Herschleb J."/>
            <person name="Runnheim R."/>
            <person name="Forrest D."/>
            <person name="Amos-Landgraf J."/>
            <person name="Schwartz D.C."/>
            <person name="Cheng Z."/>
            <person name="Lindblad-Toh K."/>
            <person name="Eichler E.E."/>
            <person name="Ponting C.P."/>
        </authorList>
    </citation>
    <scope>NUCLEOTIDE SEQUENCE [LARGE SCALE GENOMIC DNA]</scope>
    <source>
        <strain>C57BL/6J</strain>
    </source>
</reference>
<reference key="3">
    <citation type="journal article" date="1984" name="EMBO J.">
        <title>Sequencing of laminin B chain cDNAs reveals C-terminal regions of coiled-coil alpha-helix.</title>
        <authorList>
            <person name="Barlow D.P."/>
            <person name="Green N.M."/>
            <person name="Kurkinen M."/>
            <person name="Hogan B.L.M."/>
        </authorList>
    </citation>
    <scope>NUCLEOTIDE SEQUENCE [MRNA] OF 1292-1786</scope>
</reference>
<reference key="4">
    <citation type="journal article" date="1997" name="Eur. J. Biochem.">
        <title>Cloning of the mouse laminin alpha 4 cDNA. Expression in a subset of endothelium.</title>
        <authorList>
            <person name="Frieser M."/>
            <person name="Noeckel H."/>
            <person name="Pausch F."/>
            <person name="Roeder C."/>
            <person name="Hahn A."/>
            <person name="Deutzmann R."/>
            <person name="Sorokin L.M."/>
        </authorList>
    </citation>
    <scope>PROTEIN SEQUENCE OF 165-172; 539-547 AND 712-719</scope>
    <source>
        <strain>BALB/cJ</strain>
        <tissue>Endothelial cell</tissue>
    </source>
</reference>
<reference key="5">
    <citation type="journal article" date="2009" name="Nat. Biotechnol.">
        <title>Mass-spectrometric identification and relative quantification of N-linked cell surface glycoproteins.</title>
        <authorList>
            <person name="Wollscheid B."/>
            <person name="Bausch-Fluck D."/>
            <person name="Henderson C."/>
            <person name="O'Brien R."/>
            <person name="Bibel M."/>
            <person name="Schiess R."/>
            <person name="Aebersold R."/>
            <person name="Watts J.D."/>
        </authorList>
    </citation>
    <scope>GLYCOSYLATION [LARGE SCALE ANALYSIS] AT ASN-1279; ASN-1336 AND ASN-1343</scope>
</reference>
<reference key="6">
    <citation type="journal article" date="2010" name="Cell">
        <title>A tissue-specific atlas of mouse protein phosphorylation and expression.</title>
        <authorList>
            <person name="Huttlin E.L."/>
            <person name="Jedrychowski M.P."/>
            <person name="Elias J.E."/>
            <person name="Goswami T."/>
            <person name="Rad R."/>
            <person name="Beausoleil S.A."/>
            <person name="Villen J."/>
            <person name="Haas W."/>
            <person name="Sowa M.E."/>
            <person name="Gygi S.P."/>
        </authorList>
    </citation>
    <scope>PHOSPHORYLATION [LARGE SCALE ANALYSIS] AT SER-250</scope>
    <scope>IDENTIFICATION BY MASS SPECTROMETRY [LARGE SCALE ANALYSIS]</scope>
    <source>
        <tissue>Brown adipose tissue</tissue>
        <tissue>Heart</tissue>
        <tissue>Kidney</tissue>
        <tissue>Liver</tissue>
        <tissue>Lung</tissue>
        <tissue>Pancreas</tissue>
        <tissue>Testis</tissue>
    </source>
</reference>
<reference key="7">
    <citation type="journal article" date="2013" name="Am. J. Hum. Genet.">
        <title>Mutations in LAMB1 cause cobblestone brain malformation without muscular or ocular abnormalities.</title>
        <authorList>
            <person name="Radmanesh F."/>
            <person name="Caglayan A.O."/>
            <person name="Silhavy J.L."/>
            <person name="Yilmaz C."/>
            <person name="Cantagrel V."/>
            <person name="Omar T."/>
            <person name="Rosti B."/>
            <person name="Kaymakcalan H."/>
            <person name="Gabriel S."/>
            <person name="Li M."/>
            <person name="Sestan N."/>
            <person name="Bilguvar K."/>
            <person name="Dobyns W.B."/>
            <person name="Zaki M.S."/>
            <person name="Gunel M."/>
            <person name="Gleeson J.G."/>
        </authorList>
    </citation>
    <scope>TISSUE SPECIFICITY</scope>
</reference>
<reference key="8">
    <citation type="journal article" date="2021" name="J. Cachexia Sarcopenia Muscle">
        <title>TMEM182 interacts with integrin beta 1 and regulates myoblast differentiation and muscle regeneration.</title>
        <authorList>
            <person name="Luo W."/>
            <person name="Lin Z."/>
            <person name="Chen J."/>
            <person name="Chen G."/>
            <person name="Zhang S."/>
            <person name="Liu M."/>
            <person name="Li H."/>
            <person name="He D."/>
            <person name="Liang S."/>
            <person name="Luo Q."/>
            <person name="Zhang D."/>
            <person name="Nie Q."/>
            <person name="Zhang X."/>
        </authorList>
    </citation>
    <scope>INTERACTION WITH ITGB1</scope>
</reference>
<evidence type="ECO:0000250" key="1"/>
<evidence type="ECO:0000250" key="2">
    <source>
        <dbReference type="UniProtKB" id="P07942"/>
    </source>
</evidence>
<evidence type="ECO:0000250" key="3">
    <source>
        <dbReference type="UniProtKB" id="Q01635"/>
    </source>
</evidence>
<evidence type="ECO:0000255" key="4"/>
<evidence type="ECO:0000255" key="5">
    <source>
        <dbReference type="PROSITE-ProRule" id="PRU00460"/>
    </source>
</evidence>
<evidence type="ECO:0000255" key="6">
    <source>
        <dbReference type="PROSITE-ProRule" id="PRU00462"/>
    </source>
</evidence>
<evidence type="ECO:0000255" key="7">
    <source>
        <dbReference type="PROSITE-ProRule" id="PRU00466"/>
    </source>
</evidence>
<evidence type="ECO:0000269" key="8">
    <source>
    </source>
</evidence>
<evidence type="ECO:0000269" key="9">
    <source>
    </source>
</evidence>
<evidence type="ECO:0000269" key="10">
    <source>
    </source>
</evidence>
<evidence type="ECO:0000305" key="11"/>
<evidence type="ECO:0007744" key="12">
    <source>
    </source>
</evidence>
<evidence type="ECO:0007829" key="13">
    <source>
        <dbReference type="PDB" id="4AQS"/>
    </source>
</evidence>
<evidence type="ECO:0007829" key="14">
    <source>
        <dbReference type="PDB" id="5MC9"/>
    </source>
</evidence>
<organism>
    <name type="scientific">Mus musculus</name>
    <name type="common">Mouse</name>
    <dbReference type="NCBI Taxonomy" id="10090"/>
    <lineage>
        <taxon>Eukaryota</taxon>
        <taxon>Metazoa</taxon>
        <taxon>Chordata</taxon>
        <taxon>Craniata</taxon>
        <taxon>Vertebrata</taxon>
        <taxon>Euteleostomi</taxon>
        <taxon>Mammalia</taxon>
        <taxon>Eutheria</taxon>
        <taxon>Euarchontoglires</taxon>
        <taxon>Glires</taxon>
        <taxon>Rodentia</taxon>
        <taxon>Myomorpha</taxon>
        <taxon>Muroidea</taxon>
        <taxon>Muridae</taxon>
        <taxon>Murinae</taxon>
        <taxon>Mus</taxon>
        <taxon>Mus</taxon>
    </lineage>
</organism>
<sequence>MGLLQVFAFGVLALWGTRVCAQEPEFSYGCAEGSCYPATGDLLIGRAQKLSVTSTCGLHKPEPYCIVSHLQEDKKCFICDSRDPYHETLNPDSHLIENVVTTFAPNRLKIWWQSENGVENVTIQLDLEAEFHFTHLIMTFKTFRPAAMLIERSSDFGKAWGVYRYFAYDCESSFPGISTGPMKKVDDIICDSRYSDIEPSTEGEVIFRALDPAFKIEDPYSPRIQNLLKITNLRIKFVKLHTLGDNLLDSRMEIREKYYYAVYDMVVRGNCFCYGHASECAPVDGVNEEVEGMVHGHCMCRHNTKGLNCELCMDFYHDLPWRPAEGRNSNACKKCNCNEHSSSCHFDMAVFLATGNVSGGVCDNCQHNTMGRNCEQCKPFYFQHPERDIRDPNLCEPCTCDPAGSENGGICDGYTDFSVGLIAGQCRCKLHVEGERCDVCKEGFYDLSAEDPYGCKSCACNPLGTIPGGNPCDSETGYCYCKRLVTGQRCDQCLPQHWGLSNDLDGCRPCDCDLGGALNNSCSEDSGQCSCLPHMIGRQCNEVESGYYFTTLDHYIYEAEEANLGPGVIVVERQYIQDRIPSWTGPGFVRVPEGAYLEFFIDNIPYSMEYEILIRYEPQLPDHWEKAVITVQRPGKIPASSRCGNTVPDDDNQVVSLSPGSRYVVLPRPVCFEKGMNYTVRLELPQYTASGSDVESPYTFIDSLVLMPYCKSLDIFTVGGSGDGEVTNSAWETFQRYRCLENSRSVVKTPMTDVCRNIIFSISALIHQTGLACECDPQGSLSSVCDPNGGQCQCRPNVVGRTCNRCAPGTFGFGPNGCKPCDCHLQGSASAFCDAITGQCHCFQGIYARQCDRCLPGYWGFPSCQPCQCNGHALDCDTVTGECLSCQDYTTGHNCERCLAGYYGDPIIGSGDHCRPCPCPDGPDSGRQFARSCYQDPVTLQLACVCDPGYIGSRCDDCASGFFGNPSDFGGSCQPCQCHHNIDTTDPEACDKETGRCLKCLYHTEGDHCQLCQYGYYGDALRQDCRKCVCNYLGTVKEHCNGSDCHCDKATGQCSCLPNVIGQNCDRCAPNTWQLASGTGCGPCNCNAAHSFGPSCNEFTGQCQCMPGFGGRTCSECQELFWGDPDVECRACDCDPRGIETPQCDQSTGQCVCVEGVEGPRCDKCTRGYSGVFPDCTPCHQCFALWDAIIGELTNRTHKFLEKAKALKISGVIGPYRETVDSVEKKVNEIKDILAQSPAAEPLKNIGILFEEAEKLTKDVTEKMAQVEVKLTDTASQSNSTAGELGALQAEAESLDKTVKELAEQLEFIKNSDIQGALDSITKYFQMSLEAEKRVNASTTDPNSTVEQSALTRDRVEDLMLERESPFKEQQEEQARLLDELAGKLQSLDLSAVAQMTCGTPPGADCSESECGGPNCRTDEGEKKCGGPGCGGLVTVAHSAWQKAMDFDRDVLSALAEVEQLSKMVSEAKVRADEAKQNAQDVLLKTNATKEKVDKSNEDLRNLIKQIRNFLTEDSADLDSIEAVANEVLKMEMPSTPQQLQNLTEDIRERVETLSQVEVILQQSAADIARAELLLEEAKRASKSATDVKVTADMVKEALEEAEKAQVAAEKAIKQADEDIQGTQNLLTSIESETAASEETLTNASQRISKLERNVEELKRKAAQNSGEAEYIEKVVYSVKQNADDVKKTLDGELDEKYKKVESLIAQKTEESADARRKAELLQNEAKTLLAQANSKLQLLEDLERKYEDNQKYLEDKAQELVRLEGEVRSLLKDISEKVAVYSTCL</sequence>
<feature type="signal peptide">
    <location>
        <begin position="1"/>
        <end position="21"/>
    </location>
</feature>
<feature type="chain" id="PRO_0000017066" description="Laminin subunit beta-1">
    <location>
        <begin position="22"/>
        <end position="1786"/>
    </location>
</feature>
<feature type="domain" description="Laminin N-terminal" evidence="7">
    <location>
        <begin position="31"/>
        <end position="270"/>
    </location>
</feature>
<feature type="domain" description="Laminin EGF-like 1" evidence="5">
    <location>
        <begin position="271"/>
        <end position="334"/>
    </location>
</feature>
<feature type="domain" description="Laminin EGF-like 2" evidence="5">
    <location>
        <begin position="335"/>
        <end position="397"/>
    </location>
</feature>
<feature type="domain" description="Laminin EGF-like 3" evidence="5">
    <location>
        <begin position="398"/>
        <end position="457"/>
    </location>
</feature>
<feature type="domain" description="Laminin EGF-like 4" evidence="5">
    <location>
        <begin position="458"/>
        <end position="509"/>
    </location>
</feature>
<feature type="domain" description="Laminin EGF-like 5; truncated" evidence="5">
    <location>
        <begin position="510"/>
        <end position="540"/>
    </location>
</feature>
<feature type="domain" description="Laminin IV type B" evidence="6">
    <location>
        <begin position="549"/>
        <end position="767"/>
    </location>
</feature>
<feature type="domain" description="Laminin EGF-like 6" evidence="5">
    <location>
        <begin position="773"/>
        <end position="820"/>
    </location>
</feature>
<feature type="domain" description="Laminin EGF-like 7" evidence="5">
    <location>
        <begin position="821"/>
        <end position="866"/>
    </location>
</feature>
<feature type="domain" description="Laminin EGF-like 8" evidence="5">
    <location>
        <begin position="867"/>
        <end position="916"/>
    </location>
</feature>
<feature type="domain" description="Laminin EGF-like 9" evidence="5">
    <location>
        <begin position="917"/>
        <end position="975"/>
    </location>
</feature>
<feature type="domain" description="Laminin EGF-like 10" evidence="5">
    <location>
        <begin position="976"/>
        <end position="1027"/>
    </location>
</feature>
<feature type="domain" description="Laminin EGF-like 11" evidence="5">
    <location>
        <begin position="1028"/>
        <end position="1083"/>
    </location>
</feature>
<feature type="domain" description="Laminin EGF-like 12" evidence="5">
    <location>
        <begin position="1084"/>
        <end position="1131"/>
    </location>
</feature>
<feature type="domain" description="Laminin EGF-like 13" evidence="5">
    <location>
        <begin position="1132"/>
        <end position="1178"/>
    </location>
</feature>
<feature type="region of interest" description="Domain II">
    <location>
        <begin position="1179"/>
        <end position="1397"/>
    </location>
</feature>
<feature type="region of interest" description="Domain alpha">
    <location>
        <begin position="1398"/>
        <end position="1430"/>
    </location>
</feature>
<feature type="region of interest" description="Domain I">
    <location>
        <begin position="1431"/>
        <end position="1786"/>
    </location>
</feature>
<feature type="coiled-coil region" evidence="4">
    <location>
        <begin position="1216"/>
        <end position="1315"/>
    </location>
</feature>
<feature type="coiled-coil region" evidence="4">
    <location>
        <begin position="1368"/>
        <end position="1388"/>
    </location>
</feature>
<feature type="coiled-coil region" evidence="4">
    <location>
        <begin position="1448"/>
        <end position="1778"/>
    </location>
</feature>
<feature type="modified residue" description="Phosphoserine" evidence="12">
    <location>
        <position position="250"/>
    </location>
</feature>
<feature type="modified residue" description="Phosphoserine" evidence="2">
    <location>
        <position position="1496"/>
    </location>
</feature>
<feature type="modified residue" description="Phosphoserine" evidence="2">
    <location>
        <position position="1666"/>
    </location>
</feature>
<feature type="glycosylation site" description="N-linked (GlcNAc...) asparagine" evidence="4">
    <location>
        <position position="120"/>
    </location>
</feature>
<feature type="glycosylation site" description="N-linked (GlcNAc...) asparagine" evidence="4">
    <location>
        <position position="356"/>
    </location>
</feature>
<feature type="glycosylation site" description="N-linked (GlcNAc...) asparagine" evidence="4">
    <location>
        <position position="519"/>
    </location>
</feature>
<feature type="glycosylation site" description="N-linked (GlcNAc...) asparagine" evidence="4">
    <location>
        <position position="677"/>
    </location>
</feature>
<feature type="glycosylation site" description="N-linked (GlcNAc...) asparagine" evidence="4">
    <location>
        <position position="1041"/>
    </location>
</feature>
<feature type="glycosylation site" description="N-linked (GlcNAc...) asparagine" evidence="4">
    <location>
        <position position="1195"/>
    </location>
</feature>
<feature type="glycosylation site" description="N-linked (GlcNAc...) asparagine" evidence="8">
    <location>
        <position position="1279"/>
    </location>
</feature>
<feature type="glycosylation site" description="N-linked (GlcNAc...) asparagine" evidence="8">
    <location>
        <position position="1336"/>
    </location>
</feature>
<feature type="glycosylation site" description="N-linked (GlcNAc...) asparagine" evidence="8">
    <location>
        <position position="1343"/>
    </location>
</feature>
<feature type="glycosylation site" description="N-linked (GlcNAc...) asparagine" evidence="4">
    <location>
        <position position="1487"/>
    </location>
</feature>
<feature type="glycosylation site" description="N-linked (GlcNAc...) asparagine" evidence="4">
    <location>
        <position position="1542"/>
    </location>
</feature>
<feature type="glycosylation site" description="N-linked (GlcNAc...) asparagine" evidence="4">
    <location>
        <position position="1643"/>
    </location>
</feature>
<feature type="disulfide bond" evidence="5">
    <location>
        <begin position="271"/>
        <end position="280"/>
    </location>
</feature>
<feature type="disulfide bond" evidence="5">
    <location>
        <begin position="273"/>
        <end position="298"/>
    </location>
</feature>
<feature type="disulfide bond" evidence="5">
    <location>
        <begin position="300"/>
        <end position="309"/>
    </location>
</feature>
<feature type="disulfide bond" evidence="5">
    <location>
        <begin position="312"/>
        <end position="332"/>
    </location>
</feature>
<feature type="disulfide bond" evidence="5">
    <location>
        <begin position="335"/>
        <end position="344"/>
    </location>
</feature>
<feature type="disulfide bond" evidence="5">
    <location>
        <begin position="337"/>
        <end position="362"/>
    </location>
</feature>
<feature type="disulfide bond" evidence="5">
    <location>
        <begin position="365"/>
        <end position="374"/>
    </location>
</feature>
<feature type="disulfide bond" evidence="5">
    <location>
        <begin position="377"/>
        <end position="395"/>
    </location>
</feature>
<feature type="disulfide bond" evidence="5">
    <location>
        <begin position="398"/>
        <end position="411"/>
    </location>
</feature>
<feature type="disulfide bond" evidence="5">
    <location>
        <begin position="400"/>
        <end position="426"/>
    </location>
</feature>
<feature type="disulfide bond" evidence="5">
    <location>
        <begin position="428"/>
        <end position="437"/>
    </location>
</feature>
<feature type="disulfide bond" evidence="5">
    <location>
        <begin position="440"/>
        <end position="455"/>
    </location>
</feature>
<feature type="disulfide bond" evidence="5">
    <location>
        <begin position="458"/>
        <end position="472"/>
    </location>
</feature>
<feature type="disulfide bond" evidence="5">
    <location>
        <begin position="460"/>
        <end position="479"/>
    </location>
</feature>
<feature type="disulfide bond" evidence="5">
    <location>
        <begin position="481"/>
        <end position="490"/>
    </location>
</feature>
<feature type="disulfide bond" evidence="5">
    <location>
        <begin position="493"/>
        <end position="507"/>
    </location>
</feature>
<feature type="disulfide bond" evidence="5">
    <location>
        <begin position="510"/>
        <end position="522"/>
    </location>
</feature>
<feature type="disulfide bond" evidence="5">
    <location>
        <begin position="512"/>
        <end position="529"/>
    </location>
</feature>
<feature type="disulfide bond" evidence="5">
    <location>
        <begin position="531"/>
        <end position="540"/>
    </location>
</feature>
<feature type="disulfide bond" evidence="5">
    <location>
        <begin position="773"/>
        <end position="785"/>
    </location>
</feature>
<feature type="disulfide bond" evidence="5">
    <location>
        <begin position="775"/>
        <end position="792"/>
    </location>
</feature>
<feature type="disulfide bond" evidence="5">
    <location>
        <begin position="794"/>
        <end position="803"/>
    </location>
</feature>
<feature type="disulfide bond" evidence="5">
    <location>
        <begin position="806"/>
        <end position="818"/>
    </location>
</feature>
<feature type="disulfide bond" evidence="5">
    <location>
        <begin position="821"/>
        <end position="833"/>
    </location>
</feature>
<feature type="disulfide bond" evidence="5">
    <location>
        <begin position="823"/>
        <end position="840"/>
    </location>
</feature>
<feature type="disulfide bond" evidence="5">
    <location>
        <begin position="842"/>
        <end position="851"/>
    </location>
</feature>
<feature type="disulfide bond" evidence="5">
    <location>
        <begin position="854"/>
        <end position="864"/>
    </location>
</feature>
<feature type="disulfide bond" evidence="5">
    <location>
        <begin position="867"/>
        <end position="876"/>
    </location>
</feature>
<feature type="disulfide bond" evidence="5">
    <location>
        <begin position="869"/>
        <end position="883"/>
    </location>
</feature>
<feature type="disulfide bond" evidence="5">
    <location>
        <begin position="886"/>
        <end position="895"/>
    </location>
</feature>
<feature type="disulfide bond" evidence="5">
    <location>
        <begin position="898"/>
        <end position="914"/>
    </location>
</feature>
<feature type="disulfide bond" evidence="5">
    <location>
        <begin position="917"/>
        <end position="933"/>
    </location>
</feature>
<feature type="disulfide bond" evidence="5">
    <location>
        <begin position="919"/>
        <end position="944"/>
    </location>
</feature>
<feature type="disulfide bond" evidence="5">
    <location>
        <begin position="946"/>
        <end position="955"/>
    </location>
</feature>
<feature type="disulfide bond" evidence="5">
    <location>
        <begin position="958"/>
        <end position="973"/>
    </location>
</feature>
<feature type="disulfide bond" evidence="5">
    <location>
        <begin position="976"/>
        <end position="990"/>
    </location>
</feature>
<feature type="disulfide bond" evidence="5">
    <location>
        <begin position="978"/>
        <end position="997"/>
    </location>
</feature>
<feature type="disulfide bond" evidence="5">
    <location>
        <begin position="1000"/>
        <end position="1009"/>
    </location>
</feature>
<feature type="disulfide bond" evidence="5">
    <location>
        <begin position="1012"/>
        <end position="1025"/>
    </location>
</feature>
<feature type="disulfide bond" evidence="5">
    <location>
        <begin position="1028"/>
        <end position="1040"/>
    </location>
</feature>
<feature type="disulfide bond" evidence="5">
    <location>
        <begin position="1030"/>
        <end position="1054"/>
    </location>
</feature>
<feature type="disulfide bond" evidence="5">
    <location>
        <begin position="1056"/>
        <end position="1065"/>
    </location>
</feature>
<feature type="disulfide bond" evidence="5">
    <location>
        <begin position="1068"/>
        <end position="1081"/>
    </location>
</feature>
<feature type="disulfide bond" evidence="5">
    <location>
        <begin position="1084"/>
        <end position="1096"/>
    </location>
</feature>
<feature type="disulfide bond" evidence="5">
    <location>
        <begin position="1086"/>
        <end position="1103"/>
    </location>
</feature>
<feature type="disulfide bond" evidence="5">
    <location>
        <begin position="1105"/>
        <end position="1114"/>
    </location>
</feature>
<feature type="disulfide bond" evidence="5">
    <location>
        <begin position="1117"/>
        <end position="1129"/>
    </location>
</feature>
<feature type="disulfide bond" evidence="5">
    <location>
        <begin position="1132"/>
        <end position="1144"/>
    </location>
</feature>
<feature type="disulfide bond" evidence="5">
    <location>
        <begin position="1134"/>
        <end position="1151"/>
    </location>
</feature>
<feature type="disulfide bond" evidence="5">
    <location>
        <begin position="1153"/>
        <end position="1162"/>
    </location>
</feature>
<feature type="disulfide bond" evidence="5">
    <location>
        <begin position="1165"/>
        <end position="1176"/>
    </location>
</feature>
<feature type="disulfide bond" description="Interchain" evidence="11">
    <location>
        <position position="1179"/>
    </location>
</feature>
<feature type="disulfide bond" description="Interchain" evidence="11">
    <location>
        <position position="1182"/>
    </location>
</feature>
<feature type="disulfide bond" description="Interchain" evidence="11">
    <location>
        <position position="1785"/>
    </location>
</feature>
<feature type="sequence conflict" description="In Ref. 1; AAA39407." evidence="11" ref="1">
    <original>A</original>
    <variation>T</variation>
    <location>
        <position position="159"/>
    </location>
</feature>
<feature type="sequence conflict" description="In Ref. 1; AAA39407." evidence="11" ref="1">
    <original>I</original>
    <variation>V</variation>
    <location>
        <position position="569"/>
    </location>
</feature>
<feature type="sequence conflict" description="In Ref. 1; AAA39407." evidence="11" ref="1">
    <original>E</original>
    <variation>D</variation>
    <location>
        <position position="993"/>
    </location>
</feature>
<feature type="sequence conflict" description="In Ref. 1; AAA39407 and 3; CAA28839." evidence="11" ref="1 3">
    <original>V</original>
    <variation>A</variation>
    <location>
        <position position="1393"/>
    </location>
</feature>
<feature type="sequence conflict" description="In Ref. 1; AAA39407." evidence="11" ref="1">
    <original>MEMP</original>
    <variation>SGNA</variation>
    <location>
        <begin position="1531"/>
        <end position="1534"/>
    </location>
</feature>
<feature type="sequence conflict" description="In Ref. 3; CAA28839." evidence="11" ref="3">
    <original>G</original>
    <variation>C</variation>
    <location>
        <position position="1692"/>
    </location>
</feature>
<feature type="sequence conflict" description="In Ref. 3; CAA28839." evidence="11" ref="3">
    <original>D</original>
    <variation>N</variation>
    <location>
        <position position="1749"/>
    </location>
</feature>
<feature type="helix" evidence="13">
    <location>
        <begin position="30"/>
        <end position="32"/>
    </location>
</feature>
<feature type="strand" evidence="13">
    <location>
        <begin position="40"/>
        <end position="43"/>
    </location>
</feature>
<feature type="helix" evidence="13">
    <location>
        <begin position="47"/>
        <end position="49"/>
    </location>
</feature>
<feature type="strand" evidence="13">
    <location>
        <begin position="58"/>
        <end position="60"/>
    </location>
</feature>
<feature type="strand" evidence="13">
    <location>
        <begin position="62"/>
        <end position="67"/>
    </location>
</feature>
<feature type="strand" evidence="13">
    <location>
        <begin position="69"/>
        <end position="72"/>
    </location>
</feature>
<feature type="strand" evidence="13">
    <location>
        <begin position="74"/>
        <end position="79"/>
    </location>
</feature>
<feature type="turn" evidence="13">
    <location>
        <begin position="87"/>
        <end position="89"/>
    </location>
</feature>
<feature type="helix" evidence="13">
    <location>
        <begin position="96"/>
        <end position="98"/>
    </location>
</feature>
<feature type="strand" evidence="13">
    <location>
        <begin position="122"/>
        <end position="142"/>
    </location>
</feature>
<feature type="strand" evidence="13">
    <location>
        <begin position="146"/>
        <end position="155"/>
    </location>
</feature>
<feature type="strand" evidence="13">
    <location>
        <begin position="161"/>
        <end position="169"/>
    </location>
</feature>
<feature type="turn" evidence="13">
    <location>
        <begin position="170"/>
        <end position="172"/>
    </location>
</feature>
<feature type="strand" evidence="13">
    <location>
        <begin position="173"/>
        <end position="177"/>
    </location>
</feature>
<feature type="turn" evidence="13">
    <location>
        <begin position="200"/>
        <end position="202"/>
    </location>
</feature>
<feature type="strand" evidence="13">
    <location>
        <begin position="204"/>
        <end position="210"/>
    </location>
</feature>
<feature type="strand" evidence="13">
    <location>
        <begin position="212"/>
        <end position="214"/>
    </location>
</feature>
<feature type="helix" evidence="13">
    <location>
        <begin position="222"/>
        <end position="228"/>
    </location>
</feature>
<feature type="strand" evidence="13">
    <location>
        <begin position="229"/>
        <end position="239"/>
    </location>
</feature>
<feature type="helix" evidence="13">
    <location>
        <begin position="252"/>
        <end position="255"/>
    </location>
</feature>
<feature type="strand" evidence="13">
    <location>
        <begin position="261"/>
        <end position="270"/>
    </location>
</feature>
<feature type="strand" evidence="13">
    <location>
        <begin position="304"/>
        <end position="309"/>
    </location>
</feature>
<feature type="strand" evidence="13">
    <location>
        <begin position="342"/>
        <end position="346"/>
    </location>
</feature>
<feature type="helix" evidence="13">
    <location>
        <begin position="348"/>
        <end position="353"/>
    </location>
</feature>
<feature type="strand" evidence="13">
    <location>
        <begin position="360"/>
        <end position="364"/>
    </location>
</feature>
<feature type="strand" evidence="13">
    <location>
        <begin position="369"/>
        <end position="371"/>
    </location>
</feature>
<feature type="strand" evidence="13">
    <location>
        <begin position="381"/>
        <end position="383"/>
    </location>
</feature>
<feature type="strand" evidence="13">
    <location>
        <begin position="385"/>
        <end position="387"/>
    </location>
</feature>
<feature type="strand" evidence="13">
    <location>
        <begin position="395"/>
        <end position="397"/>
    </location>
</feature>
<feature type="turn" evidence="13">
    <location>
        <begin position="402"/>
        <end position="404"/>
    </location>
</feature>
<feature type="helix" evidence="13">
    <location>
        <begin position="407"/>
        <end position="409"/>
    </location>
</feature>
<feature type="helix" evidence="13">
    <location>
        <begin position="417"/>
        <end position="419"/>
    </location>
</feature>
<feature type="turn" evidence="13">
    <location>
        <begin position="434"/>
        <end position="437"/>
    </location>
</feature>
<feature type="strand" evidence="13">
    <location>
        <begin position="454"/>
        <end position="457"/>
    </location>
</feature>
<feature type="turn" evidence="13">
    <location>
        <begin position="462"/>
        <end position="464"/>
    </location>
</feature>
<feature type="turn" evidence="13">
    <location>
        <begin position="474"/>
        <end position="476"/>
    </location>
</feature>
<feature type="turn" evidence="13">
    <location>
        <begin position="488"/>
        <end position="490"/>
    </location>
</feature>
<feature type="helix" evidence="14">
    <location>
        <begin position="1739"/>
        <end position="1784"/>
    </location>
</feature>
<protein>
    <recommendedName>
        <fullName>Laminin subunit beta-1</fullName>
    </recommendedName>
    <alternativeName>
        <fullName>Laminin B1 chain</fullName>
    </alternativeName>
    <alternativeName>
        <fullName>Laminin-1 subunit beta</fullName>
    </alternativeName>
    <alternativeName>
        <fullName>Laminin-10 subunit beta</fullName>
    </alternativeName>
    <alternativeName>
        <fullName>Laminin-12 subunit beta</fullName>
    </alternativeName>
    <alternativeName>
        <fullName>Laminin-2 subunit beta</fullName>
    </alternativeName>
    <alternativeName>
        <fullName>Laminin-6 subunit beta</fullName>
    </alternativeName>
    <alternativeName>
        <fullName>Laminin-8 subunit beta</fullName>
    </alternativeName>
</protein>
<keyword id="KW-0002">3D-structure</keyword>
<keyword id="KW-0084">Basement membrane</keyword>
<keyword id="KW-0130">Cell adhesion</keyword>
<keyword id="KW-0175">Coiled coil</keyword>
<keyword id="KW-0903">Direct protein sequencing</keyword>
<keyword id="KW-1015">Disulfide bond</keyword>
<keyword id="KW-0272">Extracellular matrix</keyword>
<keyword id="KW-0325">Glycoprotein</keyword>
<keyword id="KW-0424">Laminin EGF-like domain</keyword>
<keyword id="KW-0597">Phosphoprotein</keyword>
<keyword id="KW-1185">Reference proteome</keyword>
<keyword id="KW-0677">Repeat</keyword>
<keyword id="KW-0964">Secreted</keyword>
<keyword id="KW-0732">Signal</keyword>
<comment type="function">
    <text evidence="1">Binding to cells via a high affinity receptor, laminin is thought to mediate the attachment, migration and organization of cells into tissues during embryonic development by interacting with other extracellular matrix components. Involved in the organization of the laminar architecture of the cerebral cortex (By similarity). It is probably required for the integrity of the basement membrane/glia limitans that serves as an anchor point for the endfeet of radial glial cells and as a physical barrier to migrating neurons (By similarity). Radial glial cells play a central role in cerebral cortical development, where they act both as the proliferative unit of the cerebral cortex and a scaffold for neurons migrating toward the pial surface (By similarity).</text>
</comment>
<comment type="subunit">
    <text evidence="3 10">Laminin is a complex glycoprotein, consisting of three different polypeptide chains (alpha, beta, gamma), which are bound to each other by disulfide bonds into a cross-shaped molecule comprising one long and three short arms with globules at each end. Beta-1 is a subunit of laminin-1 (laminin-111 or EHS laminin), laminin-2 (laminin-211 or merosin), laminin-6 (laminin-311 or K-laminin), laminin-8 (laminin-411), laminin-10 (laminin-511) and laminin-12 (laminin-213) (By similarity). Interacts with ITGB1 (PubMed:34427057).</text>
</comment>
<comment type="interaction">
    <interactant intactId="EBI-6662997">
        <id>P02469</id>
    </interactant>
    <interactant intactId="EBI-7059830">
        <id>P02468</id>
        <label>Lamc1</label>
    </interactant>
    <organismsDiffer>false</organismsDiffer>
    <experiments>4</experiments>
</comment>
<comment type="interaction">
    <interactant intactId="EBI-6662997">
        <id>P02469</id>
    </interactant>
    <interactant intactId="EBI-457650">
        <id>P31696</id>
        <label>AGRN</label>
    </interactant>
    <organismsDiffer>true</organismsDiffer>
    <experiments>2</experiments>
</comment>
<comment type="subcellular location">
    <subcellularLocation>
        <location>Secreted</location>
        <location>Extracellular space</location>
        <location>Extracellular matrix</location>
        <location>Basement membrane</location>
    </subcellularLocation>
    <text>Major component.</text>
</comment>
<comment type="tissue specificity">
    <text evidence="9">Widely expressed in the embryo. High levels are detected in the cerebellar basement membrane, at postnatal day 7.</text>
</comment>
<comment type="sequence caution" evidence="11">
    <conflict type="erroneous initiation">
        <sequence resource="EMBL-CDS" id="AAA39407"/>
    </conflict>
    <text>Extended N-terminus.</text>
</comment>